<evidence type="ECO:0000269" key="1">
    <source>
    </source>
</evidence>
<evidence type="ECO:0000269" key="2">
    <source>
    </source>
</evidence>
<evidence type="ECO:0000305" key="3"/>
<sequence>MAQPQPPAYENKNIYATLPRTQRGQPIVLGADPKGKNFLYTNGNSVIIRNIENPAIADVYTEHSCAVNVAKYSPSGFYIASGDASGKIRIWDTVNKEHLLKNEFQPIAGPIKDISWSPDNQRIVAVGEGRERFGHVFMSETGTSVGEISGQSKSINSADFRPARPFRIVTGSEDNTIAVFEGPPFKFKMTKQDHSRFVQAVRYSPDGKFFASAGFDGKVFLYDGTSSELVGEFGSPAHKGGVYALAWKPDSTQLLTCSGDKTCRLWTVESRELVSEFVMGTTVDDQQVSCLWQGDNLITVSLSGVITYLNVADPSKPLRVVKGHNKPITVLGLSDDRSTIYTGSHDGVVTNWNSGSGTNDRITGTGHGNQINGIAAWGDFVYTCGIDDSLRQFSVEGNSYTDYVVKLNCQPRGLAILRNENIIALACIKELTLVQDQKKIFSLPIKYEASSIAVNADTSDVAVGGDDQKLHIYTLKGGVLEPKVELDHLGAVTDVSYSPDLKYLVACDAHRKVVLYSVEEYKPAHNKEWGFHSARVNTVAWSPNSLLVASGSLDTTIIIWSVANPAKHTIIKNAHPQSQITRLVWLDNNTVISTGQDCNTKVWHVENI</sequence>
<name>WDR1_DROME</name>
<dbReference type="EMBL" id="AE014296">
    <property type="protein sequence ID" value="AAF49822.1"/>
    <property type="molecule type" value="Genomic_DNA"/>
</dbReference>
<dbReference type="EMBL" id="AE014296">
    <property type="protein sequence ID" value="AAN11835.1"/>
    <property type="molecule type" value="Genomic_DNA"/>
</dbReference>
<dbReference type="EMBL" id="AY061340">
    <property type="protein sequence ID" value="AAL28888.1"/>
    <property type="molecule type" value="mRNA"/>
</dbReference>
<dbReference type="RefSeq" id="NP_648642.1">
    <molecule id="Q9VU68-1"/>
    <property type="nucleotide sequence ID" value="NM_140385.4"/>
</dbReference>
<dbReference type="RefSeq" id="NP_729891.1">
    <molecule id="Q9VU68-2"/>
    <property type="nucleotide sequence ID" value="NM_168543.2"/>
</dbReference>
<dbReference type="SMR" id="Q9VU68"/>
<dbReference type="BioGRID" id="64849">
    <property type="interactions" value="12"/>
</dbReference>
<dbReference type="DIP" id="DIP-18795N"/>
<dbReference type="FunCoup" id="Q9VU68">
    <property type="interactions" value="1530"/>
</dbReference>
<dbReference type="IntAct" id="Q9VU68">
    <property type="interactions" value="61"/>
</dbReference>
<dbReference type="STRING" id="7227.FBpp0075581"/>
<dbReference type="GlyGen" id="Q9VU68">
    <property type="glycosylation" value="1 site, 1 O-linked glycan (1 site)"/>
</dbReference>
<dbReference type="PaxDb" id="7227-FBpp0075581"/>
<dbReference type="DNASU" id="39505"/>
<dbReference type="EnsemblMetazoa" id="FBtr0075845">
    <molecule id="Q9VU68-1"/>
    <property type="protein sequence ID" value="FBpp0075581"/>
    <property type="gene ID" value="FBgn0260049"/>
</dbReference>
<dbReference type="EnsemblMetazoa" id="FBtr0075846">
    <molecule id="Q9VU68-2"/>
    <property type="protein sequence ID" value="FBpp0075582"/>
    <property type="gene ID" value="FBgn0260049"/>
</dbReference>
<dbReference type="GeneID" id="39505"/>
<dbReference type="KEGG" id="dme:Dmel_CG10724"/>
<dbReference type="UCSC" id="CG10724-RA">
    <property type="organism name" value="d. melanogaster"/>
</dbReference>
<dbReference type="AGR" id="FB:FBgn0260049"/>
<dbReference type="CTD" id="39505"/>
<dbReference type="FlyBase" id="FBgn0260049">
    <property type="gene designation" value="flr"/>
</dbReference>
<dbReference type="VEuPathDB" id="VectorBase:FBgn0260049"/>
<dbReference type="eggNOG" id="KOG0318">
    <property type="taxonomic scope" value="Eukaryota"/>
</dbReference>
<dbReference type="GeneTree" id="ENSGT00390000009416"/>
<dbReference type="HOGENOM" id="CLU_015246_1_0_1"/>
<dbReference type="InParanoid" id="Q9VU68"/>
<dbReference type="OMA" id="FYQGPPF"/>
<dbReference type="OrthoDB" id="2306at2759"/>
<dbReference type="PhylomeDB" id="Q9VU68"/>
<dbReference type="Reactome" id="R-DME-114608">
    <property type="pathway name" value="Platelet degranulation"/>
</dbReference>
<dbReference type="BioGRID-ORCS" id="39505">
    <property type="hits" value="0 hits in 1 CRISPR screen"/>
</dbReference>
<dbReference type="GenomeRNAi" id="39505"/>
<dbReference type="PRO" id="PR:Q9VU68"/>
<dbReference type="Proteomes" id="UP000000803">
    <property type="component" value="Chromosome 3L"/>
</dbReference>
<dbReference type="Bgee" id="FBgn0260049">
    <property type="expression patterns" value="Expressed in crop (Drosophila) and 100 other cell types or tissues"/>
</dbReference>
<dbReference type="ExpressionAtlas" id="Q9VU68">
    <property type="expression patterns" value="baseline and differential"/>
</dbReference>
<dbReference type="GO" id="GO:0030864">
    <property type="term" value="C:cortical actin cytoskeleton"/>
    <property type="evidence" value="ECO:0000318"/>
    <property type="project" value="GO_Central"/>
</dbReference>
<dbReference type="GO" id="GO:0005856">
    <property type="term" value="C:cytoskeleton"/>
    <property type="evidence" value="ECO:0000314"/>
    <property type="project" value="UniProtKB"/>
</dbReference>
<dbReference type="GO" id="GO:0051015">
    <property type="term" value="F:actin filament binding"/>
    <property type="evidence" value="ECO:0000318"/>
    <property type="project" value="GO_Central"/>
</dbReference>
<dbReference type="GO" id="GO:0030042">
    <property type="term" value="P:actin filament depolymerization"/>
    <property type="evidence" value="ECO:0000315"/>
    <property type="project" value="FlyBase"/>
</dbReference>
<dbReference type="GO" id="GO:0007298">
    <property type="term" value="P:border follicle cell migration"/>
    <property type="evidence" value="ECO:0000315"/>
    <property type="project" value="FlyBase"/>
</dbReference>
<dbReference type="GO" id="GO:0001736">
    <property type="term" value="P:establishment of planar polarity"/>
    <property type="evidence" value="ECO:0000315"/>
    <property type="project" value="UniProtKB"/>
</dbReference>
<dbReference type="GO" id="GO:0035317">
    <property type="term" value="P:imaginal disc-derived wing hair organization"/>
    <property type="evidence" value="ECO:0000315"/>
    <property type="project" value="FlyBase"/>
</dbReference>
<dbReference type="GO" id="GO:0040011">
    <property type="term" value="P:locomotion"/>
    <property type="evidence" value="ECO:0000318"/>
    <property type="project" value="GO_Central"/>
</dbReference>
<dbReference type="GO" id="GO:0034316">
    <property type="term" value="P:negative regulation of Arp2/3 complex-mediated actin nucleation"/>
    <property type="evidence" value="ECO:0000316"/>
    <property type="project" value="FlyBase"/>
</dbReference>
<dbReference type="GO" id="GO:0030834">
    <property type="term" value="P:regulation of actin filament depolymerization"/>
    <property type="evidence" value="ECO:0000315"/>
    <property type="project" value="UniProtKB"/>
</dbReference>
<dbReference type="GO" id="GO:0030833">
    <property type="term" value="P:regulation of actin filament polymerization"/>
    <property type="evidence" value="ECO:0000315"/>
    <property type="project" value="FlyBase"/>
</dbReference>
<dbReference type="GO" id="GO:0045214">
    <property type="term" value="P:sarcomere organization"/>
    <property type="evidence" value="ECO:0000315"/>
    <property type="project" value="FlyBase"/>
</dbReference>
<dbReference type="CDD" id="cd00200">
    <property type="entry name" value="WD40"/>
    <property type="match status" value="1"/>
</dbReference>
<dbReference type="FunFam" id="2.130.10.10:FF:000167">
    <property type="entry name" value="Actin-interacting protein 1"/>
    <property type="match status" value="1"/>
</dbReference>
<dbReference type="FunFam" id="2.130.10.10:FF:000097">
    <property type="entry name" value="WD repeat domain 1"/>
    <property type="match status" value="1"/>
</dbReference>
<dbReference type="Gene3D" id="2.130.10.10">
    <property type="entry name" value="YVTN repeat-like/Quinoprotein amine dehydrogenase"/>
    <property type="match status" value="2"/>
</dbReference>
<dbReference type="InterPro" id="IPR015943">
    <property type="entry name" value="WD40/YVTN_repeat-like_dom_sf"/>
</dbReference>
<dbReference type="InterPro" id="IPR036322">
    <property type="entry name" value="WD40_repeat_dom_sf"/>
</dbReference>
<dbReference type="InterPro" id="IPR001680">
    <property type="entry name" value="WD40_rpt"/>
</dbReference>
<dbReference type="PANTHER" id="PTHR19856:SF0">
    <property type="entry name" value="WD REPEAT-CONTAINING PROTEIN 1"/>
    <property type="match status" value="1"/>
</dbReference>
<dbReference type="PANTHER" id="PTHR19856">
    <property type="entry name" value="WD-REPEATCONTAINING PROTEIN WDR1"/>
    <property type="match status" value="1"/>
</dbReference>
<dbReference type="Pfam" id="PF00400">
    <property type="entry name" value="WD40"/>
    <property type="match status" value="8"/>
</dbReference>
<dbReference type="SMART" id="SM00320">
    <property type="entry name" value="WD40"/>
    <property type="match status" value="11"/>
</dbReference>
<dbReference type="SUPFAM" id="SSF50978">
    <property type="entry name" value="WD40 repeat-like"/>
    <property type="match status" value="2"/>
</dbReference>
<dbReference type="PROSITE" id="PS50082">
    <property type="entry name" value="WD_REPEATS_2"/>
    <property type="match status" value="5"/>
</dbReference>
<dbReference type="PROSITE" id="PS50294">
    <property type="entry name" value="WD_REPEATS_REGION"/>
    <property type="match status" value="1"/>
</dbReference>
<accession>Q9VU68</accession>
<accession>Q8IQJ6</accession>
<gene>
    <name type="primary">flr</name>
    <name type="ORF">CG10724</name>
</gene>
<protein>
    <recommendedName>
        <fullName>Actin-interacting protein 1</fullName>
        <shortName>AIP1</shortName>
    </recommendedName>
    <alternativeName>
        <fullName>Protein flare</fullName>
    </alternativeName>
</protein>
<organism>
    <name type="scientific">Drosophila melanogaster</name>
    <name type="common">Fruit fly</name>
    <dbReference type="NCBI Taxonomy" id="7227"/>
    <lineage>
        <taxon>Eukaryota</taxon>
        <taxon>Metazoa</taxon>
        <taxon>Ecdysozoa</taxon>
        <taxon>Arthropoda</taxon>
        <taxon>Hexapoda</taxon>
        <taxon>Insecta</taxon>
        <taxon>Pterygota</taxon>
        <taxon>Neoptera</taxon>
        <taxon>Endopterygota</taxon>
        <taxon>Diptera</taxon>
        <taxon>Brachycera</taxon>
        <taxon>Muscomorpha</taxon>
        <taxon>Ephydroidea</taxon>
        <taxon>Drosophilidae</taxon>
        <taxon>Drosophila</taxon>
        <taxon>Sophophora</taxon>
    </lineage>
</organism>
<comment type="function">
    <text evidence="1 2">Induces disassembly of actin filaments in conjunction with ADF/cofilin family proteins (PubMed:17565945). Together with GMF, promotes Arp2/3-nucleated actin filament array disassembly (PubMed:25308079). Essential for organismal and cell viability (PubMed:17565945). Required for the development of normal wing cell planar polarity (PubMed:17565945). In egg chambers and together with GMF, plays an important role in directional migration of border cell clusters (PubMed:25308079).</text>
</comment>
<comment type="subcellular location">
    <subcellularLocation>
        <location evidence="1">Cytoplasm</location>
        <location evidence="1">Cytoskeleton</location>
    </subcellularLocation>
    <text>At the cell periphery of wing cells.</text>
</comment>
<comment type="alternative products">
    <event type="alternative splicing"/>
    <isoform>
        <id>Q9VU68-1</id>
        <name>A</name>
        <sequence type="displayed"/>
    </isoform>
    <isoform>
        <id>Q9VU68-2</id>
        <name>B</name>
        <sequence type="described" ref="VSP_036571"/>
    </isoform>
</comment>
<comment type="tissue specificity">
    <text evidence="1">Expressed in pupal wing cells.</text>
</comment>
<comment type="disruption phenotype">
    <text evidence="1 2">Pupals exhibit grossly abnormal epidermal hairs on wings, an abnormal accumulation of F-actin and microtubules, and disruption of the frizzled-based planar cell polarity system (PubMed:17565945). RNAi-mediated knockdown results in F-actin accumulation and moderate border cell migration delays in stage 10 egg chambers (PubMed:25308079). RNAi-mediated knockdown in border cells results in accumulation of F-actin dots, enriched with Arpc1 and GMF (PubMed:25308079). Simultaneous RNAi-mediated knockdown of GMF and flr results in an accumulation of F-actin in follicular epithelium of developing egg chambers, and in deformation of bristles in the thorax (PubMed:25308079). Simultaneous RNAi-mediated knockdown in border cells of GMF and flr enhances the accumulation of F-actin foci (PubMed:25308079).</text>
</comment>
<comment type="similarity">
    <text evidence="3">Belongs to the WD repeat AIP1 family.</text>
</comment>
<proteinExistence type="evidence at transcript level"/>
<feature type="chain" id="PRO_0000051346" description="Actin-interacting protein 1">
    <location>
        <begin position="1"/>
        <end position="608"/>
    </location>
</feature>
<feature type="repeat" description="WD 1">
    <location>
        <begin position="62"/>
        <end position="101"/>
    </location>
</feature>
<feature type="repeat" description="WD 2">
    <location>
        <begin position="106"/>
        <end position="149"/>
    </location>
</feature>
<feature type="repeat" description="WD 3">
    <location>
        <begin position="150"/>
        <end position="190"/>
    </location>
</feature>
<feature type="repeat" description="WD 4">
    <location>
        <begin position="193"/>
        <end position="232"/>
    </location>
</feature>
<feature type="repeat" description="WD 5">
    <location>
        <begin position="237"/>
        <end position="276"/>
    </location>
</feature>
<feature type="repeat" description="WD 6">
    <location>
        <begin position="323"/>
        <end position="362"/>
    </location>
</feature>
<feature type="repeat" description="WD 7">
    <location>
        <begin position="366"/>
        <end position="403"/>
    </location>
</feature>
<feature type="repeat" description="WD 8">
    <location>
        <begin position="444"/>
        <end position="483"/>
    </location>
</feature>
<feature type="repeat" description="WD 9">
    <location>
        <begin position="487"/>
        <end position="526"/>
    </location>
</feature>
<feature type="repeat" description="WD 10">
    <location>
        <begin position="531"/>
        <end position="570"/>
    </location>
</feature>
<feature type="repeat" description="WD 11">
    <location>
        <begin position="575"/>
        <end position="607"/>
    </location>
</feature>
<feature type="splice variant" id="VSP_036571" description="In isoform B." evidence="3">
    <original>MAQPQPPAYENK</original>
    <variation>MSQQAKNE</variation>
    <location>
        <begin position="1"/>
        <end position="12"/>
    </location>
</feature>
<keyword id="KW-0009">Actin-binding</keyword>
<keyword id="KW-0025">Alternative splicing</keyword>
<keyword id="KW-0963">Cytoplasm</keyword>
<keyword id="KW-0206">Cytoskeleton</keyword>
<keyword id="KW-0217">Developmental protein</keyword>
<keyword id="KW-1185">Reference proteome</keyword>
<keyword id="KW-0677">Repeat</keyword>
<keyword id="KW-0853">WD repeat</keyword>
<reference key="1">
    <citation type="journal article" date="2007" name="Genetics">
        <title>The flare gene, which encodes the AIP1 protein of Drosophila, functions to regulate F-actin disassembly in pupal epidermal cells.</title>
        <authorList>
            <person name="Ren N."/>
            <person name="Charlton J."/>
            <person name="Adler P.N."/>
        </authorList>
    </citation>
    <scope>NUCLEOTIDE SEQUENCE [GENOMIC DNA]</scope>
    <scope>ALTERNATIVE SPLICING</scope>
    <scope>FUNCTION</scope>
    <scope>SUBCELLULAR LOCATION</scope>
    <scope>TISSUE SPECIFICITY</scope>
    <scope>DISRUPTION PHENOTYPE</scope>
</reference>
<reference key="2">
    <citation type="journal article" date="2000" name="Science">
        <title>The genome sequence of Drosophila melanogaster.</title>
        <authorList>
            <person name="Adams M.D."/>
            <person name="Celniker S.E."/>
            <person name="Holt R.A."/>
            <person name="Evans C.A."/>
            <person name="Gocayne J.D."/>
            <person name="Amanatides P.G."/>
            <person name="Scherer S.E."/>
            <person name="Li P.W."/>
            <person name="Hoskins R.A."/>
            <person name="Galle R.F."/>
            <person name="George R.A."/>
            <person name="Lewis S.E."/>
            <person name="Richards S."/>
            <person name="Ashburner M."/>
            <person name="Henderson S.N."/>
            <person name="Sutton G.G."/>
            <person name="Wortman J.R."/>
            <person name="Yandell M.D."/>
            <person name="Zhang Q."/>
            <person name="Chen L.X."/>
            <person name="Brandon R.C."/>
            <person name="Rogers Y.-H.C."/>
            <person name="Blazej R.G."/>
            <person name="Champe M."/>
            <person name="Pfeiffer B.D."/>
            <person name="Wan K.H."/>
            <person name="Doyle C."/>
            <person name="Baxter E.G."/>
            <person name="Helt G."/>
            <person name="Nelson C.R."/>
            <person name="Miklos G.L.G."/>
            <person name="Abril J.F."/>
            <person name="Agbayani A."/>
            <person name="An H.-J."/>
            <person name="Andrews-Pfannkoch C."/>
            <person name="Baldwin D."/>
            <person name="Ballew R.M."/>
            <person name="Basu A."/>
            <person name="Baxendale J."/>
            <person name="Bayraktaroglu L."/>
            <person name="Beasley E.M."/>
            <person name="Beeson K.Y."/>
            <person name="Benos P.V."/>
            <person name="Berman B.P."/>
            <person name="Bhandari D."/>
            <person name="Bolshakov S."/>
            <person name="Borkova D."/>
            <person name="Botchan M.R."/>
            <person name="Bouck J."/>
            <person name="Brokstein P."/>
            <person name="Brottier P."/>
            <person name="Burtis K.C."/>
            <person name="Busam D.A."/>
            <person name="Butler H."/>
            <person name="Cadieu E."/>
            <person name="Center A."/>
            <person name="Chandra I."/>
            <person name="Cherry J.M."/>
            <person name="Cawley S."/>
            <person name="Dahlke C."/>
            <person name="Davenport L.B."/>
            <person name="Davies P."/>
            <person name="de Pablos B."/>
            <person name="Delcher A."/>
            <person name="Deng Z."/>
            <person name="Mays A.D."/>
            <person name="Dew I."/>
            <person name="Dietz S.M."/>
            <person name="Dodson K."/>
            <person name="Doup L.E."/>
            <person name="Downes M."/>
            <person name="Dugan-Rocha S."/>
            <person name="Dunkov B.C."/>
            <person name="Dunn P."/>
            <person name="Durbin K.J."/>
            <person name="Evangelista C.C."/>
            <person name="Ferraz C."/>
            <person name="Ferriera S."/>
            <person name="Fleischmann W."/>
            <person name="Fosler C."/>
            <person name="Gabrielian A.E."/>
            <person name="Garg N.S."/>
            <person name="Gelbart W.M."/>
            <person name="Glasser K."/>
            <person name="Glodek A."/>
            <person name="Gong F."/>
            <person name="Gorrell J.H."/>
            <person name="Gu Z."/>
            <person name="Guan P."/>
            <person name="Harris M."/>
            <person name="Harris N.L."/>
            <person name="Harvey D.A."/>
            <person name="Heiman T.J."/>
            <person name="Hernandez J.R."/>
            <person name="Houck J."/>
            <person name="Hostin D."/>
            <person name="Houston K.A."/>
            <person name="Howland T.J."/>
            <person name="Wei M.-H."/>
            <person name="Ibegwam C."/>
            <person name="Jalali M."/>
            <person name="Kalush F."/>
            <person name="Karpen G.H."/>
            <person name="Ke Z."/>
            <person name="Kennison J.A."/>
            <person name="Ketchum K.A."/>
            <person name="Kimmel B.E."/>
            <person name="Kodira C.D."/>
            <person name="Kraft C.L."/>
            <person name="Kravitz S."/>
            <person name="Kulp D."/>
            <person name="Lai Z."/>
            <person name="Lasko P."/>
            <person name="Lei Y."/>
            <person name="Levitsky A.A."/>
            <person name="Li J.H."/>
            <person name="Li Z."/>
            <person name="Liang Y."/>
            <person name="Lin X."/>
            <person name="Liu X."/>
            <person name="Mattei B."/>
            <person name="McIntosh T.C."/>
            <person name="McLeod M.P."/>
            <person name="McPherson D."/>
            <person name="Merkulov G."/>
            <person name="Milshina N.V."/>
            <person name="Mobarry C."/>
            <person name="Morris J."/>
            <person name="Moshrefi A."/>
            <person name="Mount S.M."/>
            <person name="Moy M."/>
            <person name="Murphy B."/>
            <person name="Murphy L."/>
            <person name="Muzny D.M."/>
            <person name="Nelson D.L."/>
            <person name="Nelson D.R."/>
            <person name="Nelson K.A."/>
            <person name="Nixon K."/>
            <person name="Nusskern D.R."/>
            <person name="Pacleb J.M."/>
            <person name="Palazzolo M."/>
            <person name="Pittman G.S."/>
            <person name="Pan S."/>
            <person name="Pollard J."/>
            <person name="Puri V."/>
            <person name="Reese M.G."/>
            <person name="Reinert K."/>
            <person name="Remington K."/>
            <person name="Saunders R.D.C."/>
            <person name="Scheeler F."/>
            <person name="Shen H."/>
            <person name="Shue B.C."/>
            <person name="Siden-Kiamos I."/>
            <person name="Simpson M."/>
            <person name="Skupski M.P."/>
            <person name="Smith T.J."/>
            <person name="Spier E."/>
            <person name="Spradling A.C."/>
            <person name="Stapleton M."/>
            <person name="Strong R."/>
            <person name="Sun E."/>
            <person name="Svirskas R."/>
            <person name="Tector C."/>
            <person name="Turner R."/>
            <person name="Venter E."/>
            <person name="Wang A.H."/>
            <person name="Wang X."/>
            <person name="Wang Z.-Y."/>
            <person name="Wassarman D.A."/>
            <person name="Weinstock G.M."/>
            <person name="Weissenbach J."/>
            <person name="Williams S.M."/>
            <person name="Woodage T."/>
            <person name="Worley K.C."/>
            <person name="Wu D."/>
            <person name="Yang S."/>
            <person name="Yao Q.A."/>
            <person name="Ye J."/>
            <person name="Yeh R.-F."/>
            <person name="Zaveri J.S."/>
            <person name="Zhan M."/>
            <person name="Zhang G."/>
            <person name="Zhao Q."/>
            <person name="Zheng L."/>
            <person name="Zheng X.H."/>
            <person name="Zhong F.N."/>
            <person name="Zhong W."/>
            <person name="Zhou X."/>
            <person name="Zhu S.C."/>
            <person name="Zhu X."/>
            <person name="Smith H.O."/>
            <person name="Gibbs R.A."/>
            <person name="Myers E.W."/>
            <person name="Rubin G.M."/>
            <person name="Venter J.C."/>
        </authorList>
    </citation>
    <scope>NUCLEOTIDE SEQUENCE [LARGE SCALE GENOMIC DNA]</scope>
    <source>
        <strain>Berkeley</strain>
    </source>
</reference>
<reference key="3">
    <citation type="journal article" date="2002" name="Genome Biol.">
        <title>Annotation of the Drosophila melanogaster euchromatic genome: a systematic review.</title>
        <authorList>
            <person name="Misra S."/>
            <person name="Crosby M.A."/>
            <person name="Mungall C.J."/>
            <person name="Matthews B.B."/>
            <person name="Campbell K.S."/>
            <person name="Hradecky P."/>
            <person name="Huang Y."/>
            <person name="Kaminker J.S."/>
            <person name="Millburn G.H."/>
            <person name="Prochnik S.E."/>
            <person name="Smith C.D."/>
            <person name="Tupy J.L."/>
            <person name="Whitfield E.J."/>
            <person name="Bayraktaroglu L."/>
            <person name="Berman B.P."/>
            <person name="Bettencourt B.R."/>
            <person name="Celniker S.E."/>
            <person name="de Grey A.D.N.J."/>
            <person name="Drysdale R.A."/>
            <person name="Harris N.L."/>
            <person name="Richter J."/>
            <person name="Russo S."/>
            <person name="Schroeder A.J."/>
            <person name="Shu S.Q."/>
            <person name="Stapleton M."/>
            <person name="Yamada C."/>
            <person name="Ashburner M."/>
            <person name="Gelbart W.M."/>
            <person name="Rubin G.M."/>
            <person name="Lewis S.E."/>
        </authorList>
    </citation>
    <scope>GENOME REANNOTATION</scope>
    <scope>ALTERNATIVE SPLICING</scope>
    <source>
        <strain>Berkeley</strain>
    </source>
</reference>
<reference key="4">
    <citation type="journal article" date="2002" name="Genome Biol.">
        <title>A Drosophila full-length cDNA resource.</title>
        <authorList>
            <person name="Stapleton M."/>
            <person name="Carlson J.W."/>
            <person name="Brokstein P."/>
            <person name="Yu C."/>
            <person name="Champe M."/>
            <person name="George R.A."/>
            <person name="Guarin H."/>
            <person name="Kronmiller B."/>
            <person name="Pacleb J.M."/>
            <person name="Park S."/>
            <person name="Wan K.H."/>
            <person name="Rubin G.M."/>
            <person name="Celniker S.E."/>
        </authorList>
    </citation>
    <scope>NUCLEOTIDE SEQUENCE [LARGE SCALE MRNA]</scope>
    <source>
        <strain>Berkeley</strain>
        <tissue>Embryo</tissue>
    </source>
</reference>
<reference key="5">
    <citation type="journal article" date="2014" name="Curr. Biol.">
        <title>GMF promotes leading-edge dynamics and collective cell migration in vivo.</title>
        <authorList>
            <person name="Poukkula M."/>
            <person name="Hakala M."/>
            <person name="Pentinmikko N."/>
            <person name="Sweeney M.O."/>
            <person name="Jansen S."/>
            <person name="Mattila J."/>
            <person name="Hietakangas V."/>
            <person name="Goode B.L."/>
            <person name="Lappalainen P."/>
        </authorList>
    </citation>
    <scope>FUNCTION</scope>
    <scope>DISRUPTION PHENOTYPE</scope>
</reference>